<comment type="function">
    <text evidence="1">The RuvA-RuvB-RuvC complex processes Holliday junction (HJ) DNA during genetic recombination and DNA repair, while the RuvA-RuvB complex plays an important role in the rescue of blocked DNA replication forks via replication fork reversal (RFR). RuvA specifically binds to HJ cruciform DNA, conferring on it an open structure. The RuvB hexamer acts as an ATP-dependent pump, pulling dsDNA into and through the RuvAB complex. HJ branch migration allows RuvC to scan DNA until it finds its consensus sequence, where it cleaves and resolves the cruciform DNA.</text>
</comment>
<comment type="subunit">
    <text evidence="1">Homotetramer. Forms an RuvA(8)-RuvB(12)-Holliday junction (HJ) complex. HJ DNA is sandwiched between 2 RuvA tetramers; dsDNA enters through RuvA and exits via RuvB. An RuvB hexamer assembles on each DNA strand where it exits the tetramer. Each RuvB hexamer is contacted by two RuvA subunits (via domain III) on 2 adjacent RuvB subunits; this complex drives branch migration. In the full resolvosome a probable DNA-RuvA(4)-RuvB(12)-RuvC(2) complex forms which resolves the HJ.</text>
</comment>
<comment type="subcellular location">
    <subcellularLocation>
        <location evidence="1">Cytoplasm</location>
    </subcellularLocation>
</comment>
<comment type="domain">
    <text evidence="1">Has three domains with a flexible linker between the domains II and III and assumes an 'L' shape. Domain III is highly mobile and contacts RuvB.</text>
</comment>
<comment type="similarity">
    <text evidence="1">Belongs to the RuvA family.</text>
</comment>
<keyword id="KW-0963">Cytoplasm</keyword>
<keyword id="KW-0227">DNA damage</keyword>
<keyword id="KW-0233">DNA recombination</keyword>
<keyword id="KW-0234">DNA repair</keyword>
<keyword id="KW-0238">DNA-binding</keyword>
<name>RUVA_SALPB</name>
<feature type="chain" id="PRO_1000074435" description="Holliday junction branch migration complex subunit RuvA">
    <location>
        <begin position="1"/>
        <end position="203"/>
    </location>
</feature>
<feature type="region of interest" description="Domain I" evidence="1">
    <location>
        <begin position="1"/>
        <end position="64"/>
    </location>
</feature>
<feature type="region of interest" description="Domain II" evidence="1">
    <location>
        <begin position="65"/>
        <end position="142"/>
    </location>
</feature>
<feature type="region of interest" description="Flexible linker" evidence="1">
    <location>
        <begin position="143"/>
        <end position="154"/>
    </location>
</feature>
<feature type="region of interest" description="Domain III" evidence="1">
    <location>
        <begin position="155"/>
        <end position="203"/>
    </location>
</feature>
<reference key="1">
    <citation type="submission" date="2007-11" db="EMBL/GenBank/DDBJ databases">
        <authorList>
            <consortium name="The Salmonella enterica serovar Paratyphi B Genome Sequencing Project"/>
            <person name="McClelland M."/>
            <person name="Sanderson E.K."/>
            <person name="Porwollik S."/>
            <person name="Spieth J."/>
            <person name="Clifton W.S."/>
            <person name="Fulton R."/>
            <person name="Cordes M."/>
            <person name="Wollam A."/>
            <person name="Shah N."/>
            <person name="Pepin K."/>
            <person name="Bhonagiri V."/>
            <person name="Nash W."/>
            <person name="Johnson M."/>
            <person name="Thiruvilangam P."/>
            <person name="Wilson R."/>
        </authorList>
    </citation>
    <scope>NUCLEOTIDE SEQUENCE [LARGE SCALE GENOMIC DNA]</scope>
    <source>
        <strain>ATCC BAA-1250 / SPB7</strain>
    </source>
</reference>
<dbReference type="EMBL" id="CP000886">
    <property type="protein sequence ID" value="ABX66683.1"/>
    <property type="molecule type" value="Genomic_DNA"/>
</dbReference>
<dbReference type="RefSeq" id="WP_000580334.1">
    <property type="nucleotide sequence ID" value="NC_010102.1"/>
</dbReference>
<dbReference type="SMR" id="A9MUX3"/>
<dbReference type="KEGG" id="spq:SPAB_01271"/>
<dbReference type="PATRIC" id="fig|1016998.12.peg.1198"/>
<dbReference type="HOGENOM" id="CLU_087936_0_0_6"/>
<dbReference type="BioCyc" id="SENT1016998:SPAB_RS05275-MONOMER"/>
<dbReference type="Proteomes" id="UP000008556">
    <property type="component" value="Chromosome"/>
</dbReference>
<dbReference type="GO" id="GO:0005737">
    <property type="term" value="C:cytoplasm"/>
    <property type="evidence" value="ECO:0007669"/>
    <property type="project" value="UniProtKB-SubCell"/>
</dbReference>
<dbReference type="GO" id="GO:0009379">
    <property type="term" value="C:Holliday junction helicase complex"/>
    <property type="evidence" value="ECO:0007669"/>
    <property type="project" value="InterPro"/>
</dbReference>
<dbReference type="GO" id="GO:0048476">
    <property type="term" value="C:Holliday junction resolvase complex"/>
    <property type="evidence" value="ECO:0007669"/>
    <property type="project" value="UniProtKB-UniRule"/>
</dbReference>
<dbReference type="GO" id="GO:0005524">
    <property type="term" value="F:ATP binding"/>
    <property type="evidence" value="ECO:0007669"/>
    <property type="project" value="InterPro"/>
</dbReference>
<dbReference type="GO" id="GO:0000400">
    <property type="term" value="F:four-way junction DNA binding"/>
    <property type="evidence" value="ECO:0007669"/>
    <property type="project" value="UniProtKB-UniRule"/>
</dbReference>
<dbReference type="GO" id="GO:0009378">
    <property type="term" value="F:four-way junction helicase activity"/>
    <property type="evidence" value="ECO:0007669"/>
    <property type="project" value="InterPro"/>
</dbReference>
<dbReference type="GO" id="GO:0006310">
    <property type="term" value="P:DNA recombination"/>
    <property type="evidence" value="ECO:0007669"/>
    <property type="project" value="UniProtKB-UniRule"/>
</dbReference>
<dbReference type="GO" id="GO:0006281">
    <property type="term" value="P:DNA repair"/>
    <property type="evidence" value="ECO:0007669"/>
    <property type="project" value="UniProtKB-UniRule"/>
</dbReference>
<dbReference type="CDD" id="cd14332">
    <property type="entry name" value="UBA_RuvA_C"/>
    <property type="match status" value="1"/>
</dbReference>
<dbReference type="FunFam" id="1.10.150.20:FF:000012">
    <property type="entry name" value="Holliday junction ATP-dependent DNA helicase RuvA"/>
    <property type="match status" value="1"/>
</dbReference>
<dbReference type="FunFam" id="1.10.8.10:FF:000008">
    <property type="entry name" value="Holliday junction ATP-dependent DNA helicase RuvA"/>
    <property type="match status" value="1"/>
</dbReference>
<dbReference type="FunFam" id="2.40.50.140:FF:000083">
    <property type="entry name" value="Holliday junction ATP-dependent DNA helicase RuvA"/>
    <property type="match status" value="1"/>
</dbReference>
<dbReference type="Gene3D" id="1.10.150.20">
    <property type="entry name" value="5' to 3' exonuclease, C-terminal subdomain"/>
    <property type="match status" value="1"/>
</dbReference>
<dbReference type="Gene3D" id="1.10.8.10">
    <property type="entry name" value="DNA helicase RuvA subunit, C-terminal domain"/>
    <property type="match status" value="1"/>
</dbReference>
<dbReference type="Gene3D" id="2.40.50.140">
    <property type="entry name" value="Nucleic acid-binding proteins"/>
    <property type="match status" value="1"/>
</dbReference>
<dbReference type="HAMAP" id="MF_00031">
    <property type="entry name" value="DNA_HJ_migration_RuvA"/>
    <property type="match status" value="1"/>
</dbReference>
<dbReference type="InterPro" id="IPR013849">
    <property type="entry name" value="DNA_helicase_Holl-junc_RuvA_I"/>
</dbReference>
<dbReference type="InterPro" id="IPR003583">
    <property type="entry name" value="Hlx-hairpin-Hlx_DNA-bd_motif"/>
</dbReference>
<dbReference type="InterPro" id="IPR012340">
    <property type="entry name" value="NA-bd_OB-fold"/>
</dbReference>
<dbReference type="InterPro" id="IPR000085">
    <property type="entry name" value="RuvA"/>
</dbReference>
<dbReference type="InterPro" id="IPR010994">
    <property type="entry name" value="RuvA_2-like"/>
</dbReference>
<dbReference type="InterPro" id="IPR011114">
    <property type="entry name" value="RuvA_C"/>
</dbReference>
<dbReference type="InterPro" id="IPR036267">
    <property type="entry name" value="RuvA_C_sf"/>
</dbReference>
<dbReference type="NCBIfam" id="TIGR00084">
    <property type="entry name" value="ruvA"/>
    <property type="match status" value="1"/>
</dbReference>
<dbReference type="Pfam" id="PF14520">
    <property type="entry name" value="HHH_5"/>
    <property type="match status" value="1"/>
</dbReference>
<dbReference type="Pfam" id="PF07499">
    <property type="entry name" value="RuvA_C"/>
    <property type="match status" value="1"/>
</dbReference>
<dbReference type="Pfam" id="PF01330">
    <property type="entry name" value="RuvA_N"/>
    <property type="match status" value="1"/>
</dbReference>
<dbReference type="SMART" id="SM00278">
    <property type="entry name" value="HhH1"/>
    <property type="match status" value="2"/>
</dbReference>
<dbReference type="SUPFAM" id="SSF46929">
    <property type="entry name" value="DNA helicase RuvA subunit, C-terminal domain"/>
    <property type="match status" value="1"/>
</dbReference>
<dbReference type="SUPFAM" id="SSF50249">
    <property type="entry name" value="Nucleic acid-binding proteins"/>
    <property type="match status" value="1"/>
</dbReference>
<dbReference type="SUPFAM" id="SSF47781">
    <property type="entry name" value="RuvA domain 2-like"/>
    <property type="match status" value="1"/>
</dbReference>
<sequence>MIGRLRGIILEKQPPIVLLETGGVGYEVHMPMTCFYELPEAGQEAIVFTHFVVREDAQLLYGFNNKQERTLFKELIKTNGVGPKLALAILSGMSAQQFVNAVEREELGALVKLPGIGKKTAERLIVEMKDRFKGLHGDLFTPAVDLVLTSPASPTSEDAEQEAVAALVALGYKPQEASRMVNKIARPDASSETLIRDALRAAL</sequence>
<gene>
    <name evidence="1" type="primary">ruvA</name>
    <name type="ordered locus">SPAB_01271</name>
</gene>
<evidence type="ECO:0000255" key="1">
    <source>
        <dbReference type="HAMAP-Rule" id="MF_00031"/>
    </source>
</evidence>
<protein>
    <recommendedName>
        <fullName evidence="1">Holliday junction branch migration complex subunit RuvA</fullName>
    </recommendedName>
</protein>
<accession>A9MUX3</accession>
<organism>
    <name type="scientific">Salmonella paratyphi B (strain ATCC BAA-1250 / SPB7)</name>
    <dbReference type="NCBI Taxonomy" id="1016998"/>
    <lineage>
        <taxon>Bacteria</taxon>
        <taxon>Pseudomonadati</taxon>
        <taxon>Pseudomonadota</taxon>
        <taxon>Gammaproteobacteria</taxon>
        <taxon>Enterobacterales</taxon>
        <taxon>Enterobacteriaceae</taxon>
        <taxon>Salmonella</taxon>
    </lineage>
</organism>
<proteinExistence type="inferred from homology"/>